<sequence>MKCAYFDANQCLSCRHLKTPLSDQVAAKTATLAALLKDLSVEQWLPPVVGPESGFRNKAKMVVLGAAHQPILGLVSPSGEAVSLCDCSLYPQDMQQLLHRLEAFVRQAGIPPYRVDKAKGELKFILLTRSQVRGEYMLRFVMRSEQAIPRIERELPRLLAEHPEIKVVSVNLQPVHMAILEGEEEIFLTEATRLEEEFNGVPLYIRPKSFFQTHPEVAAKLYLSARKWTRELAPTSIWDLFCGVGGFGLHCASKEVALTGIEIEAEAIACAKMSAETLGLDKVRFTALDSTSFASDSRGEEKPELIIVNPPRRGIGEALCHSLSEFAPKAILYSSCNPKTLAKDLHCISGYRVTKVQLFDMFPHTDHFEVLVMLQRIGE</sequence>
<keyword id="KW-0004">4Fe-4S</keyword>
<keyword id="KW-0408">Iron</keyword>
<keyword id="KW-0411">Iron-sulfur</keyword>
<keyword id="KW-0479">Metal-binding</keyword>
<keyword id="KW-0489">Methyltransferase</keyword>
<keyword id="KW-1185">Reference proteome</keyword>
<keyword id="KW-0698">rRNA processing</keyword>
<keyword id="KW-0949">S-adenosyl-L-methionine</keyword>
<keyword id="KW-0808">Transferase</keyword>
<gene>
    <name evidence="1" type="primary">rlmC</name>
    <name type="synonym">rumB</name>
    <name type="ordered locus">Shew_0801</name>
</gene>
<dbReference type="EC" id="2.1.1.189" evidence="1"/>
<dbReference type="EMBL" id="CP000606">
    <property type="protein sequence ID" value="ABO22673.1"/>
    <property type="molecule type" value="Genomic_DNA"/>
</dbReference>
<dbReference type="RefSeq" id="WP_011864607.1">
    <property type="nucleotide sequence ID" value="NC_009092.1"/>
</dbReference>
<dbReference type="SMR" id="A3QB25"/>
<dbReference type="STRING" id="323850.Shew_0801"/>
<dbReference type="KEGG" id="slo:Shew_0801"/>
<dbReference type="eggNOG" id="COG2265">
    <property type="taxonomic scope" value="Bacteria"/>
</dbReference>
<dbReference type="HOGENOM" id="CLU_014689_0_0_6"/>
<dbReference type="OrthoDB" id="9804590at2"/>
<dbReference type="Proteomes" id="UP000001558">
    <property type="component" value="Chromosome"/>
</dbReference>
<dbReference type="GO" id="GO:0051539">
    <property type="term" value="F:4 iron, 4 sulfur cluster binding"/>
    <property type="evidence" value="ECO:0007669"/>
    <property type="project" value="UniProtKB-KW"/>
</dbReference>
<dbReference type="GO" id="GO:0005506">
    <property type="term" value="F:iron ion binding"/>
    <property type="evidence" value="ECO:0007669"/>
    <property type="project" value="UniProtKB-UniRule"/>
</dbReference>
<dbReference type="GO" id="GO:0070041">
    <property type="term" value="F:rRNA (uridine-C5-)-methyltransferase activity"/>
    <property type="evidence" value="ECO:0007669"/>
    <property type="project" value="UniProtKB-UniRule"/>
</dbReference>
<dbReference type="GO" id="GO:0070475">
    <property type="term" value="P:rRNA base methylation"/>
    <property type="evidence" value="ECO:0007669"/>
    <property type="project" value="TreeGrafter"/>
</dbReference>
<dbReference type="CDD" id="cd02440">
    <property type="entry name" value="AdoMet_MTases"/>
    <property type="match status" value="1"/>
</dbReference>
<dbReference type="Gene3D" id="2.40.50.1070">
    <property type="match status" value="1"/>
</dbReference>
<dbReference type="Gene3D" id="3.40.50.150">
    <property type="entry name" value="Vaccinia Virus protein VP39"/>
    <property type="match status" value="1"/>
</dbReference>
<dbReference type="HAMAP" id="MF_01012">
    <property type="entry name" value="23SrRNA_methyltr_RlmC"/>
    <property type="match status" value="1"/>
</dbReference>
<dbReference type="InterPro" id="IPR011825">
    <property type="entry name" value="23SrRNA_MeTrfase_RlmC"/>
</dbReference>
<dbReference type="InterPro" id="IPR030390">
    <property type="entry name" value="MeTrfase_TrmA_AS"/>
</dbReference>
<dbReference type="InterPro" id="IPR030391">
    <property type="entry name" value="MeTrfase_TrmA_CS"/>
</dbReference>
<dbReference type="InterPro" id="IPR029063">
    <property type="entry name" value="SAM-dependent_MTases_sf"/>
</dbReference>
<dbReference type="InterPro" id="IPR010280">
    <property type="entry name" value="U5_MeTrfase_fam"/>
</dbReference>
<dbReference type="NCBIfam" id="TIGR02085">
    <property type="entry name" value="meth_trns_rumB"/>
    <property type="match status" value="1"/>
</dbReference>
<dbReference type="PANTHER" id="PTHR11061">
    <property type="entry name" value="RNA M5U METHYLTRANSFERASE"/>
    <property type="match status" value="1"/>
</dbReference>
<dbReference type="PANTHER" id="PTHR11061:SF30">
    <property type="entry name" value="TRNA (URACIL(54)-C(5))-METHYLTRANSFERASE"/>
    <property type="match status" value="1"/>
</dbReference>
<dbReference type="Pfam" id="PF05958">
    <property type="entry name" value="tRNA_U5-meth_tr"/>
    <property type="match status" value="1"/>
</dbReference>
<dbReference type="SUPFAM" id="SSF53335">
    <property type="entry name" value="S-adenosyl-L-methionine-dependent methyltransferases"/>
    <property type="match status" value="1"/>
</dbReference>
<dbReference type="PROSITE" id="PS51687">
    <property type="entry name" value="SAM_MT_RNA_M5U"/>
    <property type="match status" value="1"/>
</dbReference>
<dbReference type="PROSITE" id="PS01230">
    <property type="entry name" value="TRMA_1"/>
    <property type="match status" value="1"/>
</dbReference>
<dbReference type="PROSITE" id="PS01231">
    <property type="entry name" value="TRMA_2"/>
    <property type="match status" value="1"/>
</dbReference>
<name>RLMC_SHELP</name>
<accession>A3QB25</accession>
<organism>
    <name type="scientific">Shewanella loihica (strain ATCC BAA-1088 / PV-4)</name>
    <dbReference type="NCBI Taxonomy" id="323850"/>
    <lineage>
        <taxon>Bacteria</taxon>
        <taxon>Pseudomonadati</taxon>
        <taxon>Pseudomonadota</taxon>
        <taxon>Gammaproteobacteria</taxon>
        <taxon>Alteromonadales</taxon>
        <taxon>Shewanellaceae</taxon>
        <taxon>Shewanella</taxon>
    </lineage>
</organism>
<feature type="chain" id="PRO_1000063007" description="23S rRNA (uracil(747)-C(5))-methyltransferase RlmC">
    <location>
        <begin position="1"/>
        <end position="379"/>
    </location>
</feature>
<feature type="active site" description="Nucleophile" evidence="1">
    <location>
        <position position="336"/>
    </location>
</feature>
<feature type="binding site" evidence="1">
    <location>
        <position position="3"/>
    </location>
    <ligand>
        <name>[4Fe-4S] cluster</name>
        <dbReference type="ChEBI" id="CHEBI:49883"/>
    </ligand>
</feature>
<feature type="binding site" evidence="1">
    <location>
        <position position="11"/>
    </location>
    <ligand>
        <name>[4Fe-4S] cluster</name>
        <dbReference type="ChEBI" id="CHEBI:49883"/>
    </ligand>
</feature>
<feature type="binding site" evidence="1">
    <location>
        <position position="14"/>
    </location>
    <ligand>
        <name>[4Fe-4S] cluster</name>
        <dbReference type="ChEBI" id="CHEBI:49883"/>
    </ligand>
</feature>
<feature type="binding site" evidence="1">
    <location>
        <position position="87"/>
    </location>
    <ligand>
        <name>[4Fe-4S] cluster</name>
        <dbReference type="ChEBI" id="CHEBI:49883"/>
    </ligand>
</feature>
<feature type="binding site" evidence="1">
    <location>
        <position position="212"/>
    </location>
    <ligand>
        <name>S-adenosyl-L-methionine</name>
        <dbReference type="ChEBI" id="CHEBI:59789"/>
    </ligand>
</feature>
<feature type="binding site" evidence="1">
    <location>
        <position position="241"/>
    </location>
    <ligand>
        <name>S-adenosyl-L-methionine</name>
        <dbReference type="ChEBI" id="CHEBI:59789"/>
    </ligand>
</feature>
<feature type="binding site" evidence="1">
    <location>
        <position position="262"/>
    </location>
    <ligand>
        <name>S-adenosyl-L-methionine</name>
        <dbReference type="ChEBI" id="CHEBI:59789"/>
    </ligand>
</feature>
<feature type="binding site" evidence="1">
    <location>
        <position position="309"/>
    </location>
    <ligand>
        <name>S-adenosyl-L-methionine</name>
        <dbReference type="ChEBI" id="CHEBI:59789"/>
    </ligand>
</feature>
<reference key="1">
    <citation type="submission" date="2007-03" db="EMBL/GenBank/DDBJ databases">
        <title>Complete sequence of Shewanella loihica PV-4.</title>
        <authorList>
            <consortium name="US DOE Joint Genome Institute"/>
            <person name="Copeland A."/>
            <person name="Lucas S."/>
            <person name="Lapidus A."/>
            <person name="Barry K."/>
            <person name="Detter J.C."/>
            <person name="Glavina del Rio T."/>
            <person name="Hammon N."/>
            <person name="Israni S."/>
            <person name="Dalin E."/>
            <person name="Tice H."/>
            <person name="Pitluck S."/>
            <person name="Chain P."/>
            <person name="Malfatti S."/>
            <person name="Shin M."/>
            <person name="Vergez L."/>
            <person name="Schmutz J."/>
            <person name="Larimer F."/>
            <person name="Land M."/>
            <person name="Hauser L."/>
            <person name="Kyrpides N."/>
            <person name="Mikhailova N."/>
            <person name="Romine M.F."/>
            <person name="Serres G."/>
            <person name="Fredrickson J."/>
            <person name="Tiedje J."/>
            <person name="Richardson P."/>
        </authorList>
    </citation>
    <scope>NUCLEOTIDE SEQUENCE [LARGE SCALE GENOMIC DNA]</scope>
    <source>
        <strain>ATCC BAA-1088 / PV-4</strain>
    </source>
</reference>
<protein>
    <recommendedName>
        <fullName evidence="1">23S rRNA (uracil(747)-C(5))-methyltransferase RlmC</fullName>
        <ecNumber evidence="1">2.1.1.189</ecNumber>
    </recommendedName>
    <alternativeName>
        <fullName evidence="1">23S rRNA(m5U747)-methyltransferase</fullName>
    </alternativeName>
</protein>
<evidence type="ECO:0000255" key="1">
    <source>
        <dbReference type="HAMAP-Rule" id="MF_01012"/>
    </source>
</evidence>
<comment type="function">
    <text evidence="1">Catalyzes the formation of 5-methyl-uridine at position 747 (m5U747) in 23S rRNA.</text>
</comment>
<comment type="catalytic activity">
    <reaction evidence="1">
        <text>uridine(747) in 23S rRNA + S-adenosyl-L-methionine = 5-methyluridine(747) in 23S rRNA + S-adenosyl-L-homocysteine + H(+)</text>
        <dbReference type="Rhea" id="RHEA:42628"/>
        <dbReference type="Rhea" id="RHEA-COMP:10154"/>
        <dbReference type="Rhea" id="RHEA-COMP:10155"/>
        <dbReference type="ChEBI" id="CHEBI:15378"/>
        <dbReference type="ChEBI" id="CHEBI:57856"/>
        <dbReference type="ChEBI" id="CHEBI:59789"/>
        <dbReference type="ChEBI" id="CHEBI:65315"/>
        <dbReference type="ChEBI" id="CHEBI:74447"/>
        <dbReference type="EC" id="2.1.1.189"/>
    </reaction>
</comment>
<comment type="similarity">
    <text evidence="1">Belongs to the class I-like SAM-binding methyltransferase superfamily. RNA M5U methyltransferase family. RlmC subfamily.</text>
</comment>
<proteinExistence type="inferred from homology"/>